<evidence type="ECO:0000255" key="1">
    <source>
        <dbReference type="HAMAP-Rule" id="MF_00829"/>
    </source>
</evidence>
<feature type="chain" id="PRO_0000291402" description="UPF0435 protein BCE33L0380">
    <location>
        <begin position="1"/>
        <end position="74"/>
    </location>
</feature>
<accession>Q63GH2</accession>
<gene>
    <name type="ordered locus">BCE33L0380</name>
</gene>
<protein>
    <recommendedName>
        <fullName evidence="1">UPF0435 protein BCE33L0380</fullName>
    </recommendedName>
</protein>
<name>Y380_BACCZ</name>
<sequence>MDLSVKSEENVEYMVEAIKEKLRMVNAGAMRAASFNEEMYEDLRDIYEHVMKRETFSISEMQAITEELGTLIKK</sequence>
<reference key="1">
    <citation type="journal article" date="2006" name="J. Bacteriol.">
        <title>Pathogenomic sequence analysis of Bacillus cereus and Bacillus thuringiensis isolates closely related to Bacillus anthracis.</title>
        <authorList>
            <person name="Han C.S."/>
            <person name="Xie G."/>
            <person name="Challacombe J.F."/>
            <person name="Altherr M.R."/>
            <person name="Bhotika S.S."/>
            <person name="Bruce D."/>
            <person name="Campbell C.S."/>
            <person name="Campbell M.L."/>
            <person name="Chen J."/>
            <person name="Chertkov O."/>
            <person name="Cleland C."/>
            <person name="Dimitrijevic M."/>
            <person name="Doggett N.A."/>
            <person name="Fawcett J.J."/>
            <person name="Glavina T."/>
            <person name="Goodwin L.A."/>
            <person name="Hill K.K."/>
            <person name="Hitchcock P."/>
            <person name="Jackson P.J."/>
            <person name="Keim P."/>
            <person name="Kewalramani A.R."/>
            <person name="Longmire J."/>
            <person name="Lucas S."/>
            <person name="Malfatti S."/>
            <person name="McMurry K."/>
            <person name="Meincke L.J."/>
            <person name="Misra M."/>
            <person name="Moseman B.L."/>
            <person name="Mundt M."/>
            <person name="Munk A.C."/>
            <person name="Okinaka R.T."/>
            <person name="Parson-Quintana B."/>
            <person name="Reilly L.P."/>
            <person name="Richardson P."/>
            <person name="Robinson D.L."/>
            <person name="Rubin E."/>
            <person name="Saunders E."/>
            <person name="Tapia R."/>
            <person name="Tesmer J.G."/>
            <person name="Thayer N."/>
            <person name="Thompson L.S."/>
            <person name="Tice H."/>
            <person name="Ticknor L.O."/>
            <person name="Wills P.L."/>
            <person name="Brettin T.S."/>
            <person name="Gilna P."/>
        </authorList>
    </citation>
    <scope>NUCLEOTIDE SEQUENCE [LARGE SCALE GENOMIC DNA]</scope>
    <source>
        <strain>ZK / E33L</strain>
    </source>
</reference>
<organism>
    <name type="scientific">Bacillus cereus (strain ZK / E33L)</name>
    <dbReference type="NCBI Taxonomy" id="288681"/>
    <lineage>
        <taxon>Bacteria</taxon>
        <taxon>Bacillati</taxon>
        <taxon>Bacillota</taxon>
        <taxon>Bacilli</taxon>
        <taxon>Bacillales</taxon>
        <taxon>Bacillaceae</taxon>
        <taxon>Bacillus</taxon>
        <taxon>Bacillus cereus group</taxon>
    </lineage>
</organism>
<proteinExistence type="inferred from homology"/>
<comment type="similarity">
    <text evidence="1">Belongs to the UPF0435 family.</text>
</comment>
<dbReference type="EMBL" id="CP000001">
    <property type="protein sequence ID" value="AAU19859.1"/>
    <property type="molecule type" value="Genomic_DNA"/>
</dbReference>
<dbReference type="RefSeq" id="WP_000366197.1">
    <property type="nucleotide sequence ID" value="NZ_CP009968.1"/>
</dbReference>
<dbReference type="SMR" id="Q63GH2"/>
<dbReference type="KEGG" id="bcz:BCE33L0380"/>
<dbReference type="PATRIC" id="fig|288681.22.peg.5223"/>
<dbReference type="Proteomes" id="UP000002612">
    <property type="component" value="Chromosome"/>
</dbReference>
<dbReference type="HAMAP" id="MF_00829">
    <property type="entry name" value="UPF0435"/>
    <property type="match status" value="1"/>
</dbReference>
<dbReference type="InterPro" id="IPR009507">
    <property type="entry name" value="UPF0435"/>
</dbReference>
<dbReference type="Pfam" id="PF06569">
    <property type="entry name" value="DUF1128"/>
    <property type="match status" value="1"/>
</dbReference>